<keyword id="KW-0119">Carbohydrate metabolism</keyword>
<keyword id="KW-0961">Cell wall biogenesis/degradation</keyword>
<keyword id="KW-0325">Glycoprotein</keyword>
<keyword id="KW-0326">Glycosidase</keyword>
<keyword id="KW-0378">Hydrolase</keyword>
<keyword id="KW-0624">Polysaccharide degradation</keyword>
<keyword id="KW-0677">Repeat</keyword>
<keyword id="KW-0964">Secreted</keyword>
<keyword id="KW-0732">Signal</keyword>
<proteinExistence type="inferred from homology"/>
<accession>B0Y9F8</accession>
<name>XGHA_ASPFC</name>
<comment type="function">
    <text evidence="1">Pectinolytic enzyme involved in the degradation of xylogalacturonan (xga), a galacturonan backbone heavily substituted with xylose, and which is one important component of the hairy regions of pectin. Activity requires a galacturonic acid backbone substituted with xylose (By similarity).</text>
</comment>
<comment type="subcellular location">
    <subcellularLocation>
        <location evidence="1">Secreted</location>
    </subcellularLocation>
</comment>
<comment type="similarity">
    <text evidence="4">Belongs to the glycosyl hydrolase 28 family.</text>
</comment>
<comment type="sequence caution" evidence="4">
    <conflict type="erroneous initiation">
        <sequence resource="EMBL-CDS" id="EDP48651"/>
    </conflict>
    <text>Extended N-terminus.</text>
</comment>
<feature type="signal peptide" evidence="2">
    <location>
        <begin position="1"/>
        <end position="18"/>
    </location>
</feature>
<feature type="chain" id="PRO_0000394696" description="Probable endo-xylogalacturonan hydrolase A">
    <location>
        <begin position="19"/>
        <end position="406"/>
    </location>
</feature>
<feature type="repeat" description="PbH1 1">
    <location>
        <begin position="183"/>
        <end position="213"/>
    </location>
</feature>
<feature type="repeat" description="PbH1 2">
    <location>
        <begin position="214"/>
        <end position="235"/>
    </location>
</feature>
<feature type="repeat" description="PbH1 3">
    <location>
        <begin position="237"/>
        <end position="257"/>
    </location>
</feature>
<feature type="repeat" description="PbH1 4">
    <location>
        <begin position="299"/>
        <end position="320"/>
    </location>
</feature>
<feature type="active site" description="Proton donor" evidence="3">
    <location>
        <position position="228"/>
    </location>
</feature>
<feature type="active site" evidence="3">
    <location>
        <position position="251"/>
    </location>
</feature>
<feature type="glycosylation site" description="N-linked (GlcNAc...) asparagine" evidence="2">
    <location>
        <position position="301"/>
    </location>
</feature>
<reference key="1">
    <citation type="journal article" date="2008" name="PLoS Genet.">
        <title>Genomic islands in the pathogenic filamentous fungus Aspergillus fumigatus.</title>
        <authorList>
            <person name="Fedorova N.D."/>
            <person name="Khaldi N."/>
            <person name="Joardar V.S."/>
            <person name="Maiti R."/>
            <person name="Amedeo P."/>
            <person name="Anderson M.J."/>
            <person name="Crabtree J."/>
            <person name="Silva J.C."/>
            <person name="Badger J.H."/>
            <person name="Albarraq A."/>
            <person name="Angiuoli S."/>
            <person name="Bussey H."/>
            <person name="Bowyer P."/>
            <person name="Cotty P.J."/>
            <person name="Dyer P.S."/>
            <person name="Egan A."/>
            <person name="Galens K."/>
            <person name="Fraser-Liggett C.M."/>
            <person name="Haas B.J."/>
            <person name="Inman J.M."/>
            <person name="Kent R."/>
            <person name="Lemieux S."/>
            <person name="Malavazi I."/>
            <person name="Orvis J."/>
            <person name="Roemer T."/>
            <person name="Ronning C.M."/>
            <person name="Sundaram J.P."/>
            <person name="Sutton G."/>
            <person name="Turner G."/>
            <person name="Venter J.C."/>
            <person name="White O.R."/>
            <person name="Whitty B.R."/>
            <person name="Youngman P."/>
            <person name="Wolfe K.H."/>
            <person name="Goldman G.H."/>
            <person name="Wortman J.R."/>
            <person name="Jiang B."/>
            <person name="Denning D.W."/>
            <person name="Nierman W.C."/>
        </authorList>
    </citation>
    <scope>NUCLEOTIDE SEQUENCE [LARGE SCALE GENOMIC DNA]</scope>
    <source>
        <strain>CBS 144.89 / FGSC A1163 / CEA10</strain>
    </source>
</reference>
<gene>
    <name type="primary">xghA</name>
    <name type="ORF">AFUB_080880</name>
</gene>
<sequence length="406" mass="42284">MLYPRNLALFSLLSLSSAAPSQVERSPDAVLKPRAVCTPTAGGSPSIDDVPAIRKAIASCGNGGTIVFPAGSTYYLNSVLDLAGCSNCDIQVEGVLKFSGSTEYWGGKTAMLNIDMINGLRLRSLTGSGVIDGNGQNAYDRFASDKNYKRPTLLYITGGSNIEVSGLRQKNPPNVFNSVKGDTQHVTFKNLRMDATSNSQNPPKNTDGFDIGASTHVTISSVSVTNDDDCVAFKPGSNYVTVEDVTCTGSHGISVGSLGKSGTDVVQNILAHRINMIESTKAAGIKTYPSGNGHGLSTVKNVTFSDFNVRGCDYAFQIESCYGESESYCESNPGNAILQGIVVKGFSGTTSGKYDPVVANLNCGARGTCDVSMSAFSVKAPSGKATVLCDNTPSSLGVSCTSGASG</sequence>
<organism>
    <name type="scientific">Aspergillus fumigatus (strain CBS 144.89 / FGSC A1163 / CEA10)</name>
    <name type="common">Neosartorya fumigata</name>
    <dbReference type="NCBI Taxonomy" id="451804"/>
    <lineage>
        <taxon>Eukaryota</taxon>
        <taxon>Fungi</taxon>
        <taxon>Dikarya</taxon>
        <taxon>Ascomycota</taxon>
        <taxon>Pezizomycotina</taxon>
        <taxon>Eurotiomycetes</taxon>
        <taxon>Eurotiomycetidae</taxon>
        <taxon>Eurotiales</taxon>
        <taxon>Aspergillaceae</taxon>
        <taxon>Aspergillus</taxon>
        <taxon>Aspergillus subgen. Fumigati</taxon>
    </lineage>
</organism>
<evidence type="ECO:0000250" key="1"/>
<evidence type="ECO:0000255" key="2"/>
<evidence type="ECO:0000255" key="3">
    <source>
        <dbReference type="PROSITE-ProRule" id="PRU10052"/>
    </source>
</evidence>
<evidence type="ECO:0000305" key="4"/>
<protein>
    <recommendedName>
        <fullName>Probable endo-xylogalacturonan hydrolase A</fullName>
        <ecNumber>3.2.1.-</ecNumber>
    </recommendedName>
</protein>
<dbReference type="EC" id="3.2.1.-"/>
<dbReference type="EMBL" id="DS499600">
    <property type="protein sequence ID" value="EDP48651.1"/>
    <property type="status" value="ALT_INIT"/>
    <property type="molecule type" value="Genomic_DNA"/>
</dbReference>
<dbReference type="SMR" id="B0Y9F8"/>
<dbReference type="GlyCosmos" id="B0Y9F8">
    <property type="glycosylation" value="1 site, No reported glycans"/>
</dbReference>
<dbReference type="OrthoDB" id="31334at5052"/>
<dbReference type="PhylomeDB" id="B0Y9F8"/>
<dbReference type="Proteomes" id="UP000001699">
    <property type="component" value="Unassembled WGS sequence"/>
</dbReference>
<dbReference type="GO" id="GO:0005576">
    <property type="term" value="C:extracellular region"/>
    <property type="evidence" value="ECO:0007669"/>
    <property type="project" value="UniProtKB-SubCell"/>
</dbReference>
<dbReference type="GO" id="GO:0004650">
    <property type="term" value="F:polygalacturonase activity"/>
    <property type="evidence" value="ECO:0007669"/>
    <property type="project" value="InterPro"/>
</dbReference>
<dbReference type="GO" id="GO:0071555">
    <property type="term" value="P:cell wall organization"/>
    <property type="evidence" value="ECO:0007669"/>
    <property type="project" value="UniProtKB-KW"/>
</dbReference>
<dbReference type="GO" id="GO:0045490">
    <property type="term" value="P:pectin catabolic process"/>
    <property type="evidence" value="ECO:0007669"/>
    <property type="project" value="UniProtKB-ARBA"/>
</dbReference>
<dbReference type="FunFam" id="2.160.20.10:FF:000097">
    <property type="entry name" value="Endo-xylogalacturonan hydrolase A"/>
    <property type="match status" value="1"/>
</dbReference>
<dbReference type="Gene3D" id="2.160.20.10">
    <property type="entry name" value="Single-stranded right-handed beta-helix, Pectin lyase-like"/>
    <property type="match status" value="1"/>
</dbReference>
<dbReference type="InterPro" id="IPR000743">
    <property type="entry name" value="Glyco_hydro_28"/>
</dbReference>
<dbReference type="InterPro" id="IPR006626">
    <property type="entry name" value="PbH1"/>
</dbReference>
<dbReference type="InterPro" id="IPR012334">
    <property type="entry name" value="Pectin_lyas_fold"/>
</dbReference>
<dbReference type="InterPro" id="IPR011050">
    <property type="entry name" value="Pectin_lyase_fold/virulence"/>
</dbReference>
<dbReference type="PANTHER" id="PTHR31736">
    <property type="match status" value="1"/>
</dbReference>
<dbReference type="PANTHER" id="PTHR31736:SF9">
    <property type="entry name" value="ENDO-XYLOGALACTURONAN HYDROLASE A-RELATED"/>
    <property type="match status" value="1"/>
</dbReference>
<dbReference type="Pfam" id="PF00295">
    <property type="entry name" value="Glyco_hydro_28"/>
    <property type="match status" value="1"/>
</dbReference>
<dbReference type="SMART" id="SM00710">
    <property type="entry name" value="PbH1"/>
    <property type="match status" value="4"/>
</dbReference>
<dbReference type="SUPFAM" id="SSF51126">
    <property type="entry name" value="Pectin lyase-like"/>
    <property type="match status" value="1"/>
</dbReference>
<dbReference type="PROSITE" id="PS00502">
    <property type="entry name" value="POLYGALACTURONASE"/>
    <property type="match status" value="1"/>
</dbReference>